<accession>O84883</accession>
<gene>
    <name type="ordered locus">CT_875</name>
</gene>
<evidence type="ECO:0000256" key="1">
    <source>
        <dbReference type="SAM" id="MobiDB-lite"/>
    </source>
</evidence>
<evidence type="ECO:0000305" key="2"/>
<keyword id="KW-1185">Reference proteome</keyword>
<name>Y875_CHLTR</name>
<comment type="similarity">
    <text evidence="2">To C.muridarum TC_0268.</text>
</comment>
<organism>
    <name type="scientific">Chlamydia trachomatis serovar D (strain ATCC VR-885 / DSM 19411 / UW-3/Cx)</name>
    <dbReference type="NCBI Taxonomy" id="272561"/>
    <lineage>
        <taxon>Bacteria</taxon>
        <taxon>Pseudomonadati</taxon>
        <taxon>Chlamydiota</taxon>
        <taxon>Chlamydiia</taxon>
        <taxon>Chlamydiales</taxon>
        <taxon>Chlamydiaceae</taxon>
        <taxon>Chlamydia/Chlamydophila group</taxon>
        <taxon>Chlamydia</taxon>
    </lineage>
</organism>
<feature type="chain" id="PRO_0000218349" description="Uncharacterized protein CT_875">
    <location>
        <begin position="1"/>
        <end position="591"/>
    </location>
</feature>
<feature type="region of interest" description="Disordered" evidence="1">
    <location>
        <begin position="1"/>
        <end position="37"/>
    </location>
</feature>
<feature type="region of interest" description="Disordered" evidence="1">
    <location>
        <begin position="110"/>
        <end position="135"/>
    </location>
</feature>
<feature type="region of interest" description="Disordered" evidence="1">
    <location>
        <begin position="324"/>
        <end position="344"/>
    </location>
</feature>
<feature type="region of interest" description="Disordered" evidence="1">
    <location>
        <begin position="487"/>
        <end position="517"/>
    </location>
</feature>
<feature type="compositionally biased region" description="Gly residues" evidence="1">
    <location>
        <begin position="1"/>
        <end position="10"/>
    </location>
</feature>
<feature type="compositionally biased region" description="Polar residues" evidence="1">
    <location>
        <begin position="11"/>
        <end position="32"/>
    </location>
</feature>
<feature type="compositionally biased region" description="Low complexity" evidence="1">
    <location>
        <begin position="110"/>
        <end position="132"/>
    </location>
</feature>
<feature type="compositionally biased region" description="Basic and acidic residues" evidence="1">
    <location>
        <begin position="490"/>
        <end position="507"/>
    </location>
</feature>
<dbReference type="EMBL" id="AE001273">
    <property type="protein sequence ID" value="AAC68473.1"/>
    <property type="molecule type" value="Genomic_DNA"/>
</dbReference>
<dbReference type="PIR" id="C71460">
    <property type="entry name" value="C71460"/>
</dbReference>
<dbReference type="RefSeq" id="NP_219502.1">
    <property type="nucleotide sequence ID" value="NC_000117.1"/>
</dbReference>
<dbReference type="RefSeq" id="WP_010724957.1">
    <property type="nucleotide sequence ID" value="NC_000117.1"/>
</dbReference>
<dbReference type="STRING" id="272561.CT_875"/>
<dbReference type="EnsemblBacteria" id="AAC68473">
    <property type="protein sequence ID" value="AAC68473"/>
    <property type="gene ID" value="CT_875"/>
</dbReference>
<dbReference type="GeneID" id="884145"/>
<dbReference type="KEGG" id="ctr:CT_875"/>
<dbReference type="InParanoid" id="O84883"/>
<dbReference type="OrthoDB" id="19213at2"/>
<dbReference type="Proteomes" id="UP000000431">
    <property type="component" value="Chromosome"/>
</dbReference>
<proteinExistence type="predicted"/>
<sequence length="591" mass="66076">MSIRGVGGNGNSRIPSHNGDGSNRRSQNTKGNNKVEDRVCSLYSSRSNENRESPYAVVDVSSMIESTPTSGETTRASRGVFSRFQRGLVRVADKVRRAVQCAWSSVSTRRSSATRAAESGSSSRTARGASSGYREYSPSAARGLRLMFTDFWRTRVLRQTSPMAGVFGNLDVNEARLMAAYTSECADHLEANKLAGPDGVAAAREIAKRWEQRVRDLQDKGAARKLLNDPLGRRTPNYQSKNPGEYTVGNSMFYDGPQVANLQNVDTGFWLDMSNLSDVVLSREIQTGLRARATLEESMPMLENLEERFRRLQETCDAARTEIEESGWTRESASRMEGDEAQGPSRAQQAFQSFVNECNSIEFSFGSFGEHVRVLCARVSRGLAAAGEAIRRCFSCCKGSTHRYAPRDDLSPEGASLAETLARFADDMGIERGADGTYDIPLVDDWRRGVPSIEGEGSDSIYEIMMPIYEVMDMDLETRRSFAVQQGHYQDPRASDYDLPRASDYDLPRSPYPTPPLPPRYQLQNMDVEAGFREAVYASFVAGMYNYVVTQPQERIPNSQQVEGILRDMLTNGSQTFRDLMRRWNREVDRE</sequence>
<protein>
    <recommendedName>
        <fullName>Uncharacterized protein CT_875</fullName>
    </recommendedName>
</protein>
<reference key="1">
    <citation type="journal article" date="1998" name="Science">
        <title>Genome sequence of an obligate intracellular pathogen of humans: Chlamydia trachomatis.</title>
        <authorList>
            <person name="Stephens R.S."/>
            <person name="Kalman S."/>
            <person name="Lammel C.J."/>
            <person name="Fan J."/>
            <person name="Marathe R."/>
            <person name="Aravind L."/>
            <person name="Mitchell W.P."/>
            <person name="Olinger L."/>
            <person name="Tatusov R.L."/>
            <person name="Zhao Q."/>
            <person name="Koonin E.V."/>
            <person name="Davis R.W."/>
        </authorList>
    </citation>
    <scope>NUCLEOTIDE SEQUENCE [LARGE SCALE GENOMIC DNA]</scope>
    <source>
        <strain>ATCC VR-885 / DSM 19411 / UW-3/Cx</strain>
    </source>
</reference>